<evidence type="ECO:0000255" key="1">
    <source>
        <dbReference type="HAMAP-Rule" id="MF_01302"/>
    </source>
</evidence>
<evidence type="ECO:0000305" key="2"/>
<comment type="function">
    <text evidence="1">One of the primary rRNA binding proteins, it binds directly to 16S rRNA central domain where it helps coordinate assembly of the platform of the 30S subunit.</text>
</comment>
<comment type="subunit">
    <text evidence="1">Part of the 30S ribosomal subunit.</text>
</comment>
<comment type="similarity">
    <text evidence="1">Belongs to the universal ribosomal protein uS8 family.</text>
</comment>
<keyword id="KW-1185">Reference proteome</keyword>
<keyword id="KW-0687">Ribonucleoprotein</keyword>
<keyword id="KW-0689">Ribosomal protein</keyword>
<keyword id="KW-0694">RNA-binding</keyword>
<keyword id="KW-0699">rRNA-binding</keyword>
<dbReference type="EMBL" id="AE017199">
    <property type="protein sequence ID" value="AAR39125.1"/>
    <property type="molecule type" value="Genomic_DNA"/>
</dbReference>
<dbReference type="SMR" id="Q74NG1"/>
<dbReference type="STRING" id="228908.NEQ274"/>
<dbReference type="EnsemblBacteria" id="AAR39125">
    <property type="protein sequence ID" value="AAR39125"/>
    <property type="gene ID" value="NEQ274"/>
</dbReference>
<dbReference type="KEGG" id="neq:NEQ274"/>
<dbReference type="HOGENOM" id="CLU_098428_1_1_2"/>
<dbReference type="Proteomes" id="UP000000578">
    <property type="component" value="Chromosome"/>
</dbReference>
<dbReference type="GO" id="GO:1990904">
    <property type="term" value="C:ribonucleoprotein complex"/>
    <property type="evidence" value="ECO:0007669"/>
    <property type="project" value="UniProtKB-KW"/>
</dbReference>
<dbReference type="GO" id="GO:0005840">
    <property type="term" value="C:ribosome"/>
    <property type="evidence" value="ECO:0007669"/>
    <property type="project" value="UniProtKB-KW"/>
</dbReference>
<dbReference type="GO" id="GO:0019843">
    <property type="term" value="F:rRNA binding"/>
    <property type="evidence" value="ECO:0007669"/>
    <property type="project" value="UniProtKB-UniRule"/>
</dbReference>
<dbReference type="GO" id="GO:0003735">
    <property type="term" value="F:structural constituent of ribosome"/>
    <property type="evidence" value="ECO:0007669"/>
    <property type="project" value="InterPro"/>
</dbReference>
<dbReference type="GO" id="GO:0006412">
    <property type="term" value="P:translation"/>
    <property type="evidence" value="ECO:0007669"/>
    <property type="project" value="UniProtKB-UniRule"/>
</dbReference>
<dbReference type="Gene3D" id="3.30.1370.30">
    <property type="match status" value="1"/>
</dbReference>
<dbReference type="Gene3D" id="3.30.1490.10">
    <property type="match status" value="1"/>
</dbReference>
<dbReference type="HAMAP" id="MF_01302_A">
    <property type="entry name" value="Ribosomal_uS8_A"/>
    <property type="match status" value="1"/>
</dbReference>
<dbReference type="InterPro" id="IPR000630">
    <property type="entry name" value="Ribosomal_uS8"/>
</dbReference>
<dbReference type="InterPro" id="IPR047863">
    <property type="entry name" value="Ribosomal_uS8_CS"/>
</dbReference>
<dbReference type="InterPro" id="IPR035987">
    <property type="entry name" value="Ribosomal_uS8_sf"/>
</dbReference>
<dbReference type="NCBIfam" id="NF003115">
    <property type="entry name" value="PRK04034.1"/>
    <property type="match status" value="1"/>
</dbReference>
<dbReference type="PANTHER" id="PTHR11758">
    <property type="entry name" value="40S RIBOSOMAL PROTEIN S15A"/>
    <property type="match status" value="1"/>
</dbReference>
<dbReference type="Pfam" id="PF00410">
    <property type="entry name" value="Ribosomal_S8"/>
    <property type="match status" value="1"/>
</dbReference>
<dbReference type="SUPFAM" id="SSF56047">
    <property type="entry name" value="Ribosomal protein S8"/>
    <property type="match status" value="1"/>
</dbReference>
<dbReference type="PROSITE" id="PS00053">
    <property type="entry name" value="RIBOSOMAL_S8"/>
    <property type="match status" value="1"/>
</dbReference>
<sequence length="129" mass="14964">MARDIVADFLSHLTNVRRKGEDKTAFFPVSNLIIKLVEIMKREGYIKNYRLVDSSRGKIIEIELSEYFNEANAIKPRFPVEYSELEKYEKRYLPALNFGRLILSTSKGLITNREAKEQKIGGVLIAYVY</sequence>
<reference key="1">
    <citation type="journal article" date="2003" name="Proc. Natl. Acad. Sci. U.S.A.">
        <title>The genome of Nanoarchaeum equitans: insights into early archaeal evolution and derived parasitism.</title>
        <authorList>
            <person name="Waters E."/>
            <person name="Hohn M.J."/>
            <person name="Ahel I."/>
            <person name="Graham D.E."/>
            <person name="Adams M.D."/>
            <person name="Barnstead M."/>
            <person name="Beeson K.Y."/>
            <person name="Bibbs L."/>
            <person name="Bolanos R."/>
            <person name="Keller M."/>
            <person name="Kretz K."/>
            <person name="Lin X."/>
            <person name="Mathur E."/>
            <person name="Ni J."/>
            <person name="Podar M."/>
            <person name="Richardson T."/>
            <person name="Sutton G.G."/>
            <person name="Simon M."/>
            <person name="Soell D."/>
            <person name="Stetter K.O."/>
            <person name="Short J.M."/>
            <person name="Noorderwier M."/>
        </authorList>
    </citation>
    <scope>NUCLEOTIDE SEQUENCE [LARGE SCALE GENOMIC DNA]</scope>
    <source>
        <strain>Kin4-M</strain>
    </source>
</reference>
<protein>
    <recommendedName>
        <fullName evidence="1">Small ribosomal subunit protein uS8</fullName>
    </recommendedName>
    <alternativeName>
        <fullName evidence="2">30S ribosomal protein S8</fullName>
    </alternativeName>
</protein>
<name>RS8_NANEQ</name>
<feature type="chain" id="PRO_0000305768" description="Small ribosomal subunit protein uS8">
    <location>
        <begin position="1"/>
        <end position="129"/>
    </location>
</feature>
<organism>
    <name type="scientific">Nanoarchaeum equitans (strain Kin4-M)</name>
    <dbReference type="NCBI Taxonomy" id="228908"/>
    <lineage>
        <taxon>Archaea</taxon>
        <taxon>Nanobdellota</taxon>
        <taxon>Candidatus Nanoarchaeia</taxon>
        <taxon>Nanoarchaeales</taxon>
        <taxon>Nanoarchaeaceae</taxon>
        <taxon>Nanoarchaeum</taxon>
    </lineage>
</organism>
<proteinExistence type="inferred from homology"/>
<accession>Q74NG1</accession>
<gene>
    <name evidence="1" type="primary">rps8</name>
    <name type="ordered locus">NEQ274</name>
</gene>